<proteinExistence type="evidence at transcript level"/>
<comment type="function">
    <text evidence="1">May play a role in the transport of iron in the plastids.</text>
</comment>
<comment type="subcellular location">
    <subcellularLocation>
        <location evidence="3">Plastid</location>
        <location evidence="3">Chloroplast thylakoid membrane</location>
        <topology evidence="3">Multi-pass membrane protein</topology>
    </subcellularLocation>
</comment>
<comment type="similarity">
    <text evidence="3">Belongs to the ZIP transporter (TC 2.A.5) family.</text>
</comment>
<comment type="sequence caution" evidence="3">
    <conflict type="erroneous gene model prediction">
        <sequence resource="EMBL-CDS" id="AAG51647"/>
    </conflict>
</comment>
<comment type="sequence caution" evidence="3">
    <conflict type="erroneous initiation">
        <sequence resource="EMBL-CDS" id="AAM62825"/>
    </conflict>
    <text>Truncated N-terminus.</text>
</comment>
<feature type="transit peptide" description="Chloroplast" evidence="2">
    <location>
        <begin position="1"/>
        <end status="unknown"/>
    </location>
</feature>
<feature type="chain" id="PRO_0000041638" description="Fe(2+) transport protein 3, chloroplastic">
    <location>
        <begin status="unknown"/>
        <end position="425"/>
    </location>
</feature>
<feature type="topological domain" description="Lumenal" evidence="2">
    <location>
        <begin status="unknown"/>
        <end position="64"/>
    </location>
</feature>
<feature type="transmembrane region" description="Helical" evidence="2">
    <location>
        <begin position="65"/>
        <end position="85"/>
    </location>
</feature>
<feature type="topological domain" description="Cytoplasmic" evidence="2">
    <location>
        <begin position="86"/>
        <end position="97"/>
    </location>
</feature>
<feature type="transmembrane region" description="Helical" evidence="2">
    <location>
        <begin position="98"/>
        <end position="118"/>
    </location>
</feature>
<feature type="topological domain" description="Lumenal" evidence="2">
    <location>
        <begin position="119"/>
        <end position="137"/>
    </location>
</feature>
<feature type="transmembrane region" description="Helical" evidence="2">
    <location>
        <begin position="138"/>
        <end position="158"/>
    </location>
</feature>
<feature type="topological domain" description="Cytoplasmic" evidence="2">
    <location>
        <begin position="159"/>
        <end position="269"/>
    </location>
</feature>
<feature type="transmembrane region" description="Helical" evidence="2">
    <location>
        <begin position="270"/>
        <end position="290"/>
    </location>
</feature>
<feature type="topological domain" description="Lumenal" evidence="2">
    <location>
        <begin position="291"/>
        <end position="301"/>
    </location>
</feature>
<feature type="transmembrane region" description="Helical" evidence="2">
    <location>
        <begin position="302"/>
        <end position="322"/>
    </location>
</feature>
<feature type="topological domain" description="Cytoplasmic" evidence="2">
    <location>
        <begin position="323"/>
        <end position="333"/>
    </location>
</feature>
<feature type="transmembrane region" description="Helical" evidence="2">
    <location>
        <begin position="334"/>
        <end position="354"/>
    </location>
</feature>
<feature type="topological domain" description="Lumenal" evidence="2">
    <location>
        <begin position="355"/>
        <end position="369"/>
    </location>
</feature>
<feature type="transmembrane region" description="Helical" evidence="2">
    <location>
        <begin position="370"/>
        <end position="390"/>
    </location>
</feature>
<feature type="topological domain" description="Cytoplasmic" evidence="2">
    <location>
        <begin position="391"/>
        <end position="404"/>
    </location>
</feature>
<feature type="transmembrane region" description="Helical" evidence="2">
    <location>
        <begin position="405"/>
        <end position="425"/>
    </location>
</feature>
<feature type="sequence conflict" description="In Ref. 4; AAM62825." evidence="3" ref="4">
    <original>K</original>
    <variation>Q</variation>
    <location>
        <position position="21"/>
    </location>
</feature>
<feature type="sequence conflict" description="In Ref. 4; AAM62825." evidence="3" ref="4">
    <original>R</original>
    <variation>L</variation>
    <location>
        <position position="55"/>
    </location>
</feature>
<feature type="sequence conflict" description="In Ref. 4; AAM62825." evidence="3" ref="4">
    <original>G</original>
    <variation>C</variation>
    <location>
        <position position="113"/>
    </location>
</feature>
<dbReference type="EMBL" id="AF369915">
    <property type="protein sequence ID" value="AAL38438.1"/>
    <property type="molecule type" value="Genomic_DNA"/>
</dbReference>
<dbReference type="EMBL" id="AC018908">
    <property type="protein sequence ID" value="AAG51647.1"/>
    <property type="status" value="ALT_SEQ"/>
    <property type="molecule type" value="Genomic_DNA"/>
</dbReference>
<dbReference type="EMBL" id="CP002684">
    <property type="protein sequence ID" value="AEE33753.1"/>
    <property type="molecule type" value="Genomic_DNA"/>
</dbReference>
<dbReference type="EMBL" id="AY085604">
    <property type="protein sequence ID" value="AAM62825.1"/>
    <property type="status" value="ALT_INIT"/>
    <property type="molecule type" value="mRNA"/>
</dbReference>
<dbReference type="PIR" id="B96635">
    <property type="entry name" value="B96635"/>
</dbReference>
<dbReference type="RefSeq" id="NP_564766.1">
    <property type="nucleotide sequence ID" value="NM_104776.5"/>
</dbReference>
<dbReference type="FunCoup" id="Q8LE59">
    <property type="interactions" value="2885"/>
</dbReference>
<dbReference type="STRING" id="3702.Q8LE59"/>
<dbReference type="PaxDb" id="3702-AT1G60960.1"/>
<dbReference type="ProteomicsDB" id="247049"/>
<dbReference type="EnsemblPlants" id="AT1G60960.1">
    <property type="protein sequence ID" value="AT1G60960.1"/>
    <property type="gene ID" value="AT1G60960"/>
</dbReference>
<dbReference type="GeneID" id="842387"/>
<dbReference type="Gramene" id="AT1G60960.1">
    <property type="protein sequence ID" value="AT1G60960.1"/>
    <property type="gene ID" value="AT1G60960"/>
</dbReference>
<dbReference type="KEGG" id="ath:AT1G60960"/>
<dbReference type="Araport" id="AT1G60960"/>
<dbReference type="TAIR" id="AT1G60960">
    <property type="gene designation" value="IRT3"/>
</dbReference>
<dbReference type="eggNOG" id="KOG1558">
    <property type="taxonomic scope" value="Eukaryota"/>
</dbReference>
<dbReference type="HOGENOM" id="CLU_027089_3_0_1"/>
<dbReference type="InParanoid" id="Q8LE59"/>
<dbReference type="PRO" id="PR:Q8LE59"/>
<dbReference type="Proteomes" id="UP000006548">
    <property type="component" value="Chromosome 1"/>
</dbReference>
<dbReference type="ExpressionAtlas" id="Q8LE59">
    <property type="expression patterns" value="baseline and differential"/>
</dbReference>
<dbReference type="GO" id="GO:0009535">
    <property type="term" value="C:chloroplast thylakoid membrane"/>
    <property type="evidence" value="ECO:0007669"/>
    <property type="project" value="UniProtKB-SubCell"/>
</dbReference>
<dbReference type="GO" id="GO:0000325">
    <property type="term" value="C:plant-type vacuole"/>
    <property type="evidence" value="ECO:0007005"/>
    <property type="project" value="TAIR"/>
</dbReference>
<dbReference type="GO" id="GO:0005886">
    <property type="term" value="C:plasma membrane"/>
    <property type="evidence" value="ECO:0000314"/>
    <property type="project" value="TAIR"/>
</dbReference>
<dbReference type="GO" id="GO:0005381">
    <property type="term" value="F:iron ion transmembrane transporter activity"/>
    <property type="evidence" value="ECO:0000315"/>
    <property type="project" value="TAIR"/>
</dbReference>
<dbReference type="GO" id="GO:0005385">
    <property type="term" value="F:zinc ion transmembrane transporter activity"/>
    <property type="evidence" value="ECO:0000315"/>
    <property type="project" value="TAIR"/>
</dbReference>
<dbReference type="GO" id="GO:0006826">
    <property type="term" value="P:iron ion transport"/>
    <property type="evidence" value="ECO:0000315"/>
    <property type="project" value="TAIR"/>
</dbReference>
<dbReference type="GO" id="GO:0009624">
    <property type="term" value="P:response to nematode"/>
    <property type="evidence" value="ECO:0007007"/>
    <property type="project" value="TAIR"/>
</dbReference>
<dbReference type="GO" id="GO:0006829">
    <property type="term" value="P:zinc ion transport"/>
    <property type="evidence" value="ECO:0000315"/>
    <property type="project" value="TAIR"/>
</dbReference>
<dbReference type="InterPro" id="IPR003689">
    <property type="entry name" value="ZIP"/>
</dbReference>
<dbReference type="InterPro" id="IPR004698">
    <property type="entry name" value="Zn/Fe_permease_fun/pln"/>
</dbReference>
<dbReference type="NCBIfam" id="TIGR00820">
    <property type="entry name" value="zip"/>
    <property type="match status" value="1"/>
</dbReference>
<dbReference type="PANTHER" id="PTHR11040:SF142">
    <property type="entry name" value="FE(2+) TRANSPORT PROTEIN 3, CHLOROPLASTIC"/>
    <property type="match status" value="1"/>
</dbReference>
<dbReference type="PANTHER" id="PTHR11040">
    <property type="entry name" value="ZINC/IRON TRANSPORTER"/>
    <property type="match status" value="1"/>
</dbReference>
<dbReference type="Pfam" id="PF02535">
    <property type="entry name" value="Zip"/>
    <property type="match status" value="1"/>
</dbReference>
<sequence length="425" mass="45089">MFFVDVLWKLVPLYLFGSETKSLSATESILQIVPEAMAATSSNVLCNASESDLCRDDSAAFLLKFVAIASILLAGAAGVTIPLIGRNRRFLQTDGNLFVTAKAFAAGVILATGFVHMLAGGTEALKNPCLPDFPWSKFPFPGFFAMIAALITLFVDFMGTQYYERKQEREASESVEPFGREQSPGIVVPMIGEGTNDGKVFGEEDSGGIHIVGIHAHAAHHRHSHPPGHDSCEGHSKIDIGHAHAHGHGHGHGHGHVHGGLDAVNGARHIVVSQVLELGIVSHSIIIGLSLGVSQSPCTIRPLIAALSFHQFFEGFALGGCISQAQFRNKSATIMACFFALTTPIGIGIGTAVASSFNSHSVGALVTEGILDSLSAGILVYMALVDLIAADFLSTKMRCNFRLQIVSYVMLFLGAGLMSSLAIWA</sequence>
<organism>
    <name type="scientific">Arabidopsis thaliana</name>
    <name type="common">Mouse-ear cress</name>
    <dbReference type="NCBI Taxonomy" id="3702"/>
    <lineage>
        <taxon>Eukaryota</taxon>
        <taxon>Viridiplantae</taxon>
        <taxon>Streptophyta</taxon>
        <taxon>Embryophyta</taxon>
        <taxon>Tracheophyta</taxon>
        <taxon>Spermatophyta</taxon>
        <taxon>Magnoliopsida</taxon>
        <taxon>eudicotyledons</taxon>
        <taxon>Gunneridae</taxon>
        <taxon>Pentapetalae</taxon>
        <taxon>rosids</taxon>
        <taxon>malvids</taxon>
        <taxon>Brassicales</taxon>
        <taxon>Brassicaceae</taxon>
        <taxon>Camelineae</taxon>
        <taxon>Arabidopsis</taxon>
    </lineage>
</organism>
<reference key="1">
    <citation type="journal article" date="2001" name="Plant Physiol.">
        <title>Phylogenetic relationships within cation transporter families of Arabidopsis.</title>
        <authorList>
            <person name="Maeser P."/>
            <person name="Thomine S."/>
            <person name="Schroeder J.I."/>
            <person name="Ward J.M."/>
            <person name="Hirschi K."/>
            <person name="Sze H."/>
            <person name="Talke I.N."/>
            <person name="Amtmann A."/>
            <person name="Maathuis F.J.M."/>
            <person name="Sanders D."/>
            <person name="Harper J.F."/>
            <person name="Tchieu J."/>
            <person name="Gribskov M."/>
            <person name="Persans M.W."/>
            <person name="Salt D.E."/>
            <person name="Kim S.A."/>
            <person name="Guerinot M.L."/>
        </authorList>
    </citation>
    <scope>NUCLEOTIDE SEQUENCE [GENOMIC DNA]</scope>
</reference>
<reference key="2">
    <citation type="journal article" date="2000" name="Nature">
        <title>Sequence and analysis of chromosome 1 of the plant Arabidopsis thaliana.</title>
        <authorList>
            <person name="Theologis A."/>
            <person name="Ecker J.R."/>
            <person name="Palm C.J."/>
            <person name="Federspiel N.A."/>
            <person name="Kaul S."/>
            <person name="White O."/>
            <person name="Alonso J."/>
            <person name="Altafi H."/>
            <person name="Araujo R."/>
            <person name="Bowman C.L."/>
            <person name="Brooks S.Y."/>
            <person name="Buehler E."/>
            <person name="Chan A."/>
            <person name="Chao Q."/>
            <person name="Chen H."/>
            <person name="Cheuk R.F."/>
            <person name="Chin C.W."/>
            <person name="Chung M.K."/>
            <person name="Conn L."/>
            <person name="Conway A.B."/>
            <person name="Conway A.R."/>
            <person name="Creasy T.H."/>
            <person name="Dewar K."/>
            <person name="Dunn P."/>
            <person name="Etgu P."/>
            <person name="Feldblyum T.V."/>
            <person name="Feng J.-D."/>
            <person name="Fong B."/>
            <person name="Fujii C.Y."/>
            <person name="Gill J.E."/>
            <person name="Goldsmith A.D."/>
            <person name="Haas B."/>
            <person name="Hansen N.F."/>
            <person name="Hughes B."/>
            <person name="Huizar L."/>
            <person name="Hunter J.L."/>
            <person name="Jenkins J."/>
            <person name="Johnson-Hopson C."/>
            <person name="Khan S."/>
            <person name="Khaykin E."/>
            <person name="Kim C.J."/>
            <person name="Koo H.L."/>
            <person name="Kremenetskaia I."/>
            <person name="Kurtz D.B."/>
            <person name="Kwan A."/>
            <person name="Lam B."/>
            <person name="Langin-Hooper S."/>
            <person name="Lee A."/>
            <person name="Lee J.M."/>
            <person name="Lenz C.A."/>
            <person name="Li J.H."/>
            <person name="Li Y.-P."/>
            <person name="Lin X."/>
            <person name="Liu S.X."/>
            <person name="Liu Z.A."/>
            <person name="Luros J.S."/>
            <person name="Maiti R."/>
            <person name="Marziali A."/>
            <person name="Militscher J."/>
            <person name="Miranda M."/>
            <person name="Nguyen M."/>
            <person name="Nierman W.C."/>
            <person name="Osborne B.I."/>
            <person name="Pai G."/>
            <person name="Peterson J."/>
            <person name="Pham P.K."/>
            <person name="Rizzo M."/>
            <person name="Rooney T."/>
            <person name="Rowley D."/>
            <person name="Sakano H."/>
            <person name="Salzberg S.L."/>
            <person name="Schwartz J.R."/>
            <person name="Shinn P."/>
            <person name="Southwick A.M."/>
            <person name="Sun H."/>
            <person name="Tallon L.J."/>
            <person name="Tambunga G."/>
            <person name="Toriumi M.J."/>
            <person name="Town C.D."/>
            <person name="Utterback T."/>
            <person name="Van Aken S."/>
            <person name="Vaysberg M."/>
            <person name="Vysotskaia V.S."/>
            <person name="Walker M."/>
            <person name="Wu D."/>
            <person name="Yu G."/>
            <person name="Fraser C.M."/>
            <person name="Venter J.C."/>
            <person name="Davis R.W."/>
        </authorList>
    </citation>
    <scope>NUCLEOTIDE SEQUENCE [LARGE SCALE GENOMIC DNA]</scope>
    <source>
        <strain>cv. Columbia</strain>
    </source>
</reference>
<reference key="3">
    <citation type="journal article" date="2017" name="Plant J.">
        <title>Araport11: a complete reannotation of the Arabidopsis thaliana reference genome.</title>
        <authorList>
            <person name="Cheng C.Y."/>
            <person name="Krishnakumar V."/>
            <person name="Chan A.P."/>
            <person name="Thibaud-Nissen F."/>
            <person name="Schobel S."/>
            <person name="Town C.D."/>
        </authorList>
    </citation>
    <scope>GENOME REANNOTATION</scope>
    <source>
        <strain>cv. Columbia</strain>
    </source>
</reference>
<reference key="4">
    <citation type="submission" date="2002-03" db="EMBL/GenBank/DDBJ databases">
        <title>Full-length cDNA from Arabidopsis thaliana.</title>
        <authorList>
            <person name="Brover V.V."/>
            <person name="Troukhan M.E."/>
            <person name="Alexandrov N.A."/>
            <person name="Lu Y.-P."/>
            <person name="Flavell R.B."/>
            <person name="Feldmann K.A."/>
        </authorList>
    </citation>
    <scope>NUCLEOTIDE SEQUENCE [LARGE SCALE MRNA]</scope>
</reference>
<name>IRT3_ARATH</name>
<keyword id="KW-0150">Chloroplast</keyword>
<keyword id="KW-0406">Ion transport</keyword>
<keyword id="KW-0408">Iron</keyword>
<keyword id="KW-0410">Iron transport</keyword>
<keyword id="KW-0472">Membrane</keyword>
<keyword id="KW-0934">Plastid</keyword>
<keyword id="KW-1185">Reference proteome</keyword>
<keyword id="KW-0793">Thylakoid</keyword>
<keyword id="KW-0809">Transit peptide</keyword>
<keyword id="KW-0812">Transmembrane</keyword>
<keyword id="KW-1133">Transmembrane helix</keyword>
<keyword id="KW-0813">Transport</keyword>
<protein>
    <recommendedName>
        <fullName>Fe(2+) transport protein 3, chloroplastic</fullName>
    </recommendedName>
    <alternativeName>
        <fullName>Fe(II) transport protein 3</fullName>
    </alternativeName>
    <alternativeName>
        <fullName>Iron-regulated transporter 3</fullName>
    </alternativeName>
</protein>
<evidence type="ECO:0000250" key="1"/>
<evidence type="ECO:0000255" key="2"/>
<evidence type="ECO:0000305" key="3"/>
<gene>
    <name type="primary">IRT3</name>
    <name type="ordered locus">At1g60960</name>
    <name type="ORF">T7P1.10</name>
</gene>
<accession>Q8LE59</accession>
<accession>Q8W244</accession>
<accession>Q9C957</accession>